<organism>
    <name type="scientific">Salmonella typhimurium (strain LT2 / SGSC1412 / ATCC 700720)</name>
    <dbReference type="NCBI Taxonomy" id="99287"/>
    <lineage>
        <taxon>Bacteria</taxon>
        <taxon>Pseudomonadati</taxon>
        <taxon>Pseudomonadota</taxon>
        <taxon>Gammaproteobacteria</taxon>
        <taxon>Enterobacterales</taxon>
        <taxon>Enterobacteriaceae</taxon>
        <taxon>Salmonella</taxon>
    </lineage>
</organism>
<name>RPIA_SALTY</name>
<keyword id="KW-0413">Isomerase</keyword>
<keyword id="KW-1185">Reference proteome</keyword>
<sequence>MTQDELKKAVGWAALQYVQPGTIVGVGTGSTAAHFIDALGTMKGQIEGAVSSSDASTEKLKGLGIHVFDLNEVDSLGIYVDGADEINGHMQMIKGGGAALTREKIIASVAEKFICIADASKQVDILGKFPLPVEVIPMARSAVARQLVKLGGRPEYRQNVVTDNGNVILDVYGMEILDPIALENAINAIPGVVTVGLFANRGADVALIGTPDGVKTIVK</sequence>
<proteinExistence type="inferred from homology"/>
<comment type="function">
    <text evidence="1">Catalyzes the reversible conversion of ribose-5-phosphate to ribulose 5-phosphate.</text>
</comment>
<comment type="catalytic activity">
    <reaction evidence="1">
        <text>aldehydo-D-ribose 5-phosphate = D-ribulose 5-phosphate</text>
        <dbReference type="Rhea" id="RHEA:14657"/>
        <dbReference type="ChEBI" id="CHEBI:58121"/>
        <dbReference type="ChEBI" id="CHEBI:58273"/>
        <dbReference type="EC" id="5.3.1.6"/>
    </reaction>
</comment>
<comment type="pathway">
    <text evidence="1">Carbohydrate degradation; pentose phosphate pathway; D-ribose 5-phosphate from D-ribulose 5-phosphate (non-oxidative stage): step 1/1.</text>
</comment>
<comment type="subunit">
    <text evidence="1">Homodimer.</text>
</comment>
<comment type="similarity">
    <text evidence="1">Belongs to the ribose 5-phosphate isomerase family.</text>
</comment>
<gene>
    <name evidence="1" type="primary">rpiA</name>
    <name type="ordered locus">STM3063</name>
</gene>
<feature type="chain" id="PRO_0000158459" description="Ribose-5-phosphate isomerase A">
    <location>
        <begin position="1"/>
        <end position="219"/>
    </location>
</feature>
<feature type="active site" description="Proton acceptor" evidence="1">
    <location>
        <position position="103"/>
    </location>
</feature>
<feature type="binding site" evidence="1">
    <location>
        <begin position="28"/>
        <end position="31"/>
    </location>
    <ligand>
        <name>substrate</name>
    </ligand>
</feature>
<feature type="binding site" evidence="1">
    <location>
        <begin position="81"/>
        <end position="84"/>
    </location>
    <ligand>
        <name>substrate</name>
    </ligand>
</feature>
<feature type="binding site" evidence="1">
    <location>
        <begin position="94"/>
        <end position="97"/>
    </location>
    <ligand>
        <name>substrate</name>
    </ligand>
</feature>
<feature type="binding site" evidence="1">
    <location>
        <position position="121"/>
    </location>
    <ligand>
        <name>substrate</name>
    </ligand>
</feature>
<evidence type="ECO:0000255" key="1">
    <source>
        <dbReference type="HAMAP-Rule" id="MF_00170"/>
    </source>
</evidence>
<protein>
    <recommendedName>
        <fullName evidence="1">Ribose-5-phosphate isomerase A</fullName>
        <ecNumber evidence="1">5.3.1.6</ecNumber>
    </recommendedName>
    <alternativeName>
        <fullName evidence="1">Phosphoriboisomerase A</fullName>
        <shortName evidence="1">PRI</shortName>
    </alternativeName>
</protein>
<accession>P66692</accession>
<accession>Q8XEK1</accession>
<dbReference type="EC" id="5.3.1.6" evidence="1"/>
<dbReference type="EMBL" id="AE006468">
    <property type="protein sequence ID" value="AAL21938.1"/>
    <property type="molecule type" value="Genomic_DNA"/>
</dbReference>
<dbReference type="RefSeq" id="NP_461979.1">
    <property type="nucleotide sequence ID" value="NC_003197.2"/>
</dbReference>
<dbReference type="RefSeq" id="WP_000189741.1">
    <property type="nucleotide sequence ID" value="NC_003197.2"/>
</dbReference>
<dbReference type="SMR" id="P66692"/>
<dbReference type="STRING" id="99287.STM3063"/>
<dbReference type="PaxDb" id="99287-STM3063"/>
<dbReference type="GeneID" id="1254586"/>
<dbReference type="KEGG" id="stm:STM3063"/>
<dbReference type="PATRIC" id="fig|99287.12.peg.3245"/>
<dbReference type="HOGENOM" id="CLU_056590_1_1_6"/>
<dbReference type="OMA" id="ACHVQEK"/>
<dbReference type="PhylomeDB" id="P66692"/>
<dbReference type="BioCyc" id="SENT99287:STM3063-MONOMER"/>
<dbReference type="UniPathway" id="UPA00115">
    <property type="reaction ID" value="UER00412"/>
</dbReference>
<dbReference type="Proteomes" id="UP000001014">
    <property type="component" value="Chromosome"/>
</dbReference>
<dbReference type="GO" id="GO:0005829">
    <property type="term" value="C:cytosol"/>
    <property type="evidence" value="ECO:0000318"/>
    <property type="project" value="GO_Central"/>
</dbReference>
<dbReference type="GO" id="GO:0004751">
    <property type="term" value="F:ribose-5-phosphate isomerase activity"/>
    <property type="evidence" value="ECO:0000318"/>
    <property type="project" value="GO_Central"/>
</dbReference>
<dbReference type="GO" id="GO:0006014">
    <property type="term" value="P:D-ribose metabolic process"/>
    <property type="evidence" value="ECO:0000318"/>
    <property type="project" value="GO_Central"/>
</dbReference>
<dbReference type="GO" id="GO:0009052">
    <property type="term" value="P:pentose-phosphate shunt, non-oxidative branch"/>
    <property type="evidence" value="ECO:0000318"/>
    <property type="project" value="GO_Central"/>
</dbReference>
<dbReference type="CDD" id="cd01398">
    <property type="entry name" value="RPI_A"/>
    <property type="match status" value="1"/>
</dbReference>
<dbReference type="FunFam" id="3.30.70.260:FF:000004">
    <property type="entry name" value="Ribose-5-phosphate isomerase A"/>
    <property type="match status" value="1"/>
</dbReference>
<dbReference type="FunFam" id="3.40.50.1360:FF:000001">
    <property type="entry name" value="Ribose-5-phosphate isomerase A"/>
    <property type="match status" value="1"/>
</dbReference>
<dbReference type="Gene3D" id="3.30.70.260">
    <property type="match status" value="1"/>
</dbReference>
<dbReference type="Gene3D" id="3.40.50.1360">
    <property type="match status" value="1"/>
</dbReference>
<dbReference type="HAMAP" id="MF_00170">
    <property type="entry name" value="Rib_5P_isom_A"/>
    <property type="match status" value="1"/>
</dbReference>
<dbReference type="InterPro" id="IPR037171">
    <property type="entry name" value="NagB/RpiA_transferase-like"/>
</dbReference>
<dbReference type="InterPro" id="IPR020672">
    <property type="entry name" value="Ribose5P_isomerase_typA_subgr"/>
</dbReference>
<dbReference type="InterPro" id="IPR004788">
    <property type="entry name" value="Ribose5P_isomerase_type_A"/>
</dbReference>
<dbReference type="NCBIfam" id="NF001924">
    <property type="entry name" value="PRK00702.1"/>
    <property type="match status" value="1"/>
</dbReference>
<dbReference type="NCBIfam" id="TIGR00021">
    <property type="entry name" value="rpiA"/>
    <property type="match status" value="1"/>
</dbReference>
<dbReference type="PANTHER" id="PTHR11934">
    <property type="entry name" value="RIBOSE-5-PHOSPHATE ISOMERASE"/>
    <property type="match status" value="1"/>
</dbReference>
<dbReference type="PANTHER" id="PTHR11934:SF0">
    <property type="entry name" value="RIBOSE-5-PHOSPHATE ISOMERASE"/>
    <property type="match status" value="1"/>
</dbReference>
<dbReference type="Pfam" id="PF06026">
    <property type="entry name" value="Rib_5-P_isom_A"/>
    <property type="match status" value="1"/>
</dbReference>
<dbReference type="SUPFAM" id="SSF75445">
    <property type="entry name" value="D-ribose-5-phosphate isomerase (RpiA), lid domain"/>
    <property type="match status" value="1"/>
</dbReference>
<dbReference type="SUPFAM" id="SSF100950">
    <property type="entry name" value="NagB/RpiA/CoA transferase-like"/>
    <property type="match status" value="1"/>
</dbReference>
<reference key="1">
    <citation type="journal article" date="2001" name="Nature">
        <title>Complete genome sequence of Salmonella enterica serovar Typhimurium LT2.</title>
        <authorList>
            <person name="McClelland M."/>
            <person name="Sanderson K.E."/>
            <person name="Spieth J."/>
            <person name="Clifton S.W."/>
            <person name="Latreille P."/>
            <person name="Courtney L."/>
            <person name="Porwollik S."/>
            <person name="Ali J."/>
            <person name="Dante M."/>
            <person name="Du F."/>
            <person name="Hou S."/>
            <person name="Layman D."/>
            <person name="Leonard S."/>
            <person name="Nguyen C."/>
            <person name="Scott K."/>
            <person name="Holmes A."/>
            <person name="Grewal N."/>
            <person name="Mulvaney E."/>
            <person name="Ryan E."/>
            <person name="Sun H."/>
            <person name="Florea L."/>
            <person name="Miller W."/>
            <person name="Stoneking T."/>
            <person name="Nhan M."/>
            <person name="Waterston R."/>
            <person name="Wilson R.K."/>
        </authorList>
    </citation>
    <scope>NUCLEOTIDE SEQUENCE [LARGE SCALE GENOMIC DNA]</scope>
    <source>
        <strain>LT2 / SGSC1412 / ATCC 700720</strain>
    </source>
</reference>